<gene>
    <name evidence="1" type="primary">iscA</name>
    <name type="ordered locus">ECS88_2704</name>
</gene>
<reference key="1">
    <citation type="journal article" date="2009" name="PLoS Genet.">
        <title>Organised genome dynamics in the Escherichia coli species results in highly diverse adaptive paths.</title>
        <authorList>
            <person name="Touchon M."/>
            <person name="Hoede C."/>
            <person name="Tenaillon O."/>
            <person name="Barbe V."/>
            <person name="Baeriswyl S."/>
            <person name="Bidet P."/>
            <person name="Bingen E."/>
            <person name="Bonacorsi S."/>
            <person name="Bouchier C."/>
            <person name="Bouvet O."/>
            <person name="Calteau A."/>
            <person name="Chiapello H."/>
            <person name="Clermont O."/>
            <person name="Cruveiller S."/>
            <person name="Danchin A."/>
            <person name="Diard M."/>
            <person name="Dossat C."/>
            <person name="Karoui M.E."/>
            <person name="Frapy E."/>
            <person name="Garry L."/>
            <person name="Ghigo J.M."/>
            <person name="Gilles A.M."/>
            <person name="Johnson J."/>
            <person name="Le Bouguenec C."/>
            <person name="Lescat M."/>
            <person name="Mangenot S."/>
            <person name="Martinez-Jehanne V."/>
            <person name="Matic I."/>
            <person name="Nassif X."/>
            <person name="Oztas S."/>
            <person name="Petit M.A."/>
            <person name="Pichon C."/>
            <person name="Rouy Z."/>
            <person name="Ruf C.S."/>
            <person name="Schneider D."/>
            <person name="Tourret J."/>
            <person name="Vacherie B."/>
            <person name="Vallenet D."/>
            <person name="Medigue C."/>
            <person name="Rocha E.P.C."/>
            <person name="Denamur E."/>
        </authorList>
    </citation>
    <scope>NUCLEOTIDE SEQUENCE [LARGE SCALE GENOMIC DNA]</scope>
    <source>
        <strain>S88 / ExPEC</strain>
    </source>
</reference>
<evidence type="ECO:0000255" key="1">
    <source>
        <dbReference type="HAMAP-Rule" id="MF_01429"/>
    </source>
</evidence>
<protein>
    <recommendedName>
        <fullName evidence="1">Iron-binding protein IscA</fullName>
    </recommendedName>
    <alternativeName>
        <fullName evidence="1">Iron-sulfur cluster assembly protein</fullName>
    </alternativeName>
</protein>
<dbReference type="EMBL" id="CU928161">
    <property type="protein sequence ID" value="CAR03970.1"/>
    <property type="molecule type" value="Genomic_DNA"/>
</dbReference>
<dbReference type="RefSeq" id="WP_000028953.1">
    <property type="nucleotide sequence ID" value="NC_011742.1"/>
</dbReference>
<dbReference type="SMR" id="B7MIL8"/>
<dbReference type="GeneID" id="93774608"/>
<dbReference type="KEGG" id="ecz:ECS88_2704"/>
<dbReference type="HOGENOM" id="CLU_069054_5_1_6"/>
<dbReference type="Proteomes" id="UP000000747">
    <property type="component" value="Chromosome"/>
</dbReference>
<dbReference type="GO" id="GO:0005829">
    <property type="term" value="C:cytosol"/>
    <property type="evidence" value="ECO:0007669"/>
    <property type="project" value="TreeGrafter"/>
</dbReference>
<dbReference type="GO" id="GO:0051537">
    <property type="term" value="F:2 iron, 2 sulfur cluster binding"/>
    <property type="evidence" value="ECO:0007669"/>
    <property type="project" value="TreeGrafter"/>
</dbReference>
<dbReference type="GO" id="GO:0005506">
    <property type="term" value="F:iron ion binding"/>
    <property type="evidence" value="ECO:0007669"/>
    <property type="project" value="UniProtKB-UniRule"/>
</dbReference>
<dbReference type="GO" id="GO:0016226">
    <property type="term" value="P:iron-sulfur cluster assembly"/>
    <property type="evidence" value="ECO:0007669"/>
    <property type="project" value="UniProtKB-UniRule"/>
</dbReference>
<dbReference type="FunFam" id="2.60.300.12:FF:000001">
    <property type="entry name" value="Iron-binding protein IscA"/>
    <property type="match status" value="1"/>
</dbReference>
<dbReference type="Gene3D" id="2.60.300.12">
    <property type="entry name" value="HesB-like domain"/>
    <property type="match status" value="1"/>
</dbReference>
<dbReference type="HAMAP" id="MF_01429">
    <property type="entry name" value="Fe_S_insert_IscA"/>
    <property type="match status" value="1"/>
</dbReference>
<dbReference type="InterPro" id="IPR050322">
    <property type="entry name" value="Fe-S_cluster_asmbl/transfer"/>
</dbReference>
<dbReference type="InterPro" id="IPR000361">
    <property type="entry name" value="FeS_biogenesis"/>
</dbReference>
<dbReference type="InterPro" id="IPR016092">
    <property type="entry name" value="FeS_cluster_insertion"/>
</dbReference>
<dbReference type="InterPro" id="IPR017870">
    <property type="entry name" value="FeS_cluster_insertion_CS"/>
</dbReference>
<dbReference type="InterPro" id="IPR035903">
    <property type="entry name" value="HesB-like_dom_sf"/>
</dbReference>
<dbReference type="InterPro" id="IPR011302">
    <property type="entry name" value="IscA_proteobacteria"/>
</dbReference>
<dbReference type="NCBIfam" id="TIGR00049">
    <property type="entry name" value="iron-sulfur cluster assembly accessory protein"/>
    <property type="match status" value="1"/>
</dbReference>
<dbReference type="NCBIfam" id="TIGR02011">
    <property type="entry name" value="IscA"/>
    <property type="match status" value="1"/>
</dbReference>
<dbReference type="NCBIfam" id="NF007049">
    <property type="entry name" value="PRK09502.1"/>
    <property type="match status" value="1"/>
</dbReference>
<dbReference type="PANTHER" id="PTHR10072:SF41">
    <property type="entry name" value="IRON-SULFUR CLUSTER ASSEMBLY 1 HOMOLOG, MITOCHONDRIAL"/>
    <property type="match status" value="1"/>
</dbReference>
<dbReference type="PANTHER" id="PTHR10072">
    <property type="entry name" value="IRON-SULFUR CLUSTER ASSEMBLY PROTEIN"/>
    <property type="match status" value="1"/>
</dbReference>
<dbReference type="Pfam" id="PF01521">
    <property type="entry name" value="Fe-S_biosyn"/>
    <property type="match status" value="1"/>
</dbReference>
<dbReference type="SUPFAM" id="SSF89360">
    <property type="entry name" value="HesB-like domain"/>
    <property type="match status" value="1"/>
</dbReference>
<dbReference type="PROSITE" id="PS01152">
    <property type="entry name" value="HESB"/>
    <property type="match status" value="1"/>
</dbReference>
<accession>B7MIL8</accession>
<organism>
    <name type="scientific">Escherichia coli O45:K1 (strain S88 / ExPEC)</name>
    <dbReference type="NCBI Taxonomy" id="585035"/>
    <lineage>
        <taxon>Bacteria</taxon>
        <taxon>Pseudomonadati</taxon>
        <taxon>Pseudomonadota</taxon>
        <taxon>Gammaproteobacteria</taxon>
        <taxon>Enterobacterales</taxon>
        <taxon>Enterobacteriaceae</taxon>
        <taxon>Escherichia</taxon>
    </lineage>
</organism>
<comment type="function">
    <text evidence="1">Is able to transfer iron-sulfur clusters to apo-ferredoxin. Multiple cycles of [2Fe2S] cluster formation and transfer are observed, suggesting that IscA acts catalytically. Recruits intracellular free iron so as to provide iron for the assembly of transient iron-sulfur cluster in IscU in the presence of IscS, L-cysteine and the thioredoxin reductase system TrxA/TrxB.</text>
</comment>
<comment type="cofactor">
    <cofactor evidence="1">
        <name>Fe cation</name>
        <dbReference type="ChEBI" id="CHEBI:24875"/>
    </cofactor>
    <text evidence="1">Binds 2 iron ions per dimer. The dimer may bind additional iron ions.</text>
</comment>
<comment type="subunit">
    <text evidence="1">Homodimer; may form tetramers and higher multimers.</text>
</comment>
<comment type="similarity">
    <text evidence="1">Belongs to the HesB/IscA family.</text>
</comment>
<proteinExistence type="inferred from homology"/>
<feature type="chain" id="PRO_1000145749" description="Iron-binding protein IscA">
    <location>
        <begin position="1"/>
        <end position="107"/>
    </location>
</feature>
<feature type="binding site" evidence="1">
    <location>
        <position position="35"/>
    </location>
    <ligand>
        <name>Fe cation</name>
        <dbReference type="ChEBI" id="CHEBI:24875"/>
    </ligand>
</feature>
<feature type="binding site" evidence="1">
    <location>
        <position position="99"/>
    </location>
    <ligand>
        <name>Fe cation</name>
        <dbReference type="ChEBI" id="CHEBI:24875"/>
    </ligand>
</feature>
<feature type="binding site" evidence="1">
    <location>
        <position position="101"/>
    </location>
    <ligand>
        <name>Fe cation</name>
        <dbReference type="ChEBI" id="CHEBI:24875"/>
    </ligand>
</feature>
<sequence length="107" mass="11556">MSITLSDSAAARVNTFLANRGKGFGLRLGVRTSGCSGMAYVLEFVDEPTPEDIVFEDKGVKVVVDGKSLQFLDGTQLDFVKEGLNEGFKFTNPNVKDECGCGESFHV</sequence>
<keyword id="KW-0408">Iron</keyword>
<keyword id="KW-0479">Metal-binding</keyword>
<keyword id="KW-1185">Reference proteome</keyword>
<name>ISCA_ECO45</name>